<protein>
    <recommendedName>
        <fullName>NADH dehydrogenase [ubiquinone] 1 alpha subcomplex subunit 3</fullName>
    </recommendedName>
    <alternativeName>
        <fullName>Complex I-B9</fullName>
        <shortName>CI-B9</shortName>
    </alternativeName>
    <alternativeName>
        <fullName>NADH-ubiquinone oxidoreductase B9 subunit</fullName>
    </alternativeName>
</protein>
<evidence type="ECO:0000250" key="1">
    <source>
        <dbReference type="UniProtKB" id="Q02371"/>
    </source>
</evidence>
<evidence type="ECO:0000255" key="2"/>
<evidence type="ECO:0000256" key="3">
    <source>
        <dbReference type="SAM" id="MobiDB-lite"/>
    </source>
</evidence>
<evidence type="ECO:0000269" key="4">
    <source>
    </source>
</evidence>
<evidence type="ECO:0000305" key="5"/>
<evidence type="ECO:0007744" key="6">
    <source>
        <dbReference type="PDB" id="8PW5"/>
    </source>
</evidence>
<evidence type="ECO:0007829" key="7">
    <source>
        <dbReference type="PDB" id="6ZTQ"/>
    </source>
</evidence>
<evidence type="ECO:0007829" key="8">
    <source>
        <dbReference type="PDB" id="8OM1"/>
    </source>
</evidence>
<evidence type="ECO:0007829" key="9">
    <source>
        <dbReference type="PDB" id="8RGR"/>
    </source>
</evidence>
<accession>Q9CQ91</accession>
<accession>Q0VBA7</accession>
<feature type="initiator methionine" description="Removed" evidence="1">
    <location>
        <position position="1"/>
    </location>
</feature>
<feature type="chain" id="PRO_0000118794" description="NADH dehydrogenase [ubiquinone] 1 alpha subcomplex subunit 3">
    <location>
        <begin position="2"/>
        <end position="84"/>
    </location>
</feature>
<feature type="transmembrane region" description="Helical" evidence="2">
    <location>
        <begin position="19"/>
        <end position="39"/>
    </location>
</feature>
<feature type="region of interest" description="Disordered" evidence="3">
    <location>
        <begin position="59"/>
        <end position="84"/>
    </location>
</feature>
<feature type="modified residue" description="N-acetylalanine" evidence="1">
    <location>
        <position position="2"/>
    </location>
</feature>
<feature type="helix" evidence="8">
    <location>
        <begin position="3"/>
        <end position="15"/>
    </location>
</feature>
<feature type="helix" evidence="8">
    <location>
        <begin position="17"/>
        <end position="35"/>
    </location>
</feature>
<feature type="helix" evidence="8">
    <location>
        <begin position="39"/>
        <end position="48"/>
    </location>
</feature>
<feature type="strand" evidence="7">
    <location>
        <begin position="64"/>
        <end position="66"/>
    </location>
</feature>
<feature type="strand" evidence="9">
    <location>
        <begin position="68"/>
        <end position="73"/>
    </location>
</feature>
<feature type="helix" evidence="8">
    <location>
        <begin position="79"/>
        <end position="82"/>
    </location>
</feature>
<gene>
    <name type="primary">Ndufa3</name>
</gene>
<reference key="1">
    <citation type="journal article" date="2005" name="Science">
        <title>The transcriptional landscape of the mammalian genome.</title>
        <authorList>
            <person name="Carninci P."/>
            <person name="Kasukawa T."/>
            <person name="Katayama S."/>
            <person name="Gough J."/>
            <person name="Frith M.C."/>
            <person name="Maeda N."/>
            <person name="Oyama R."/>
            <person name="Ravasi T."/>
            <person name="Lenhard B."/>
            <person name="Wells C."/>
            <person name="Kodzius R."/>
            <person name="Shimokawa K."/>
            <person name="Bajic V.B."/>
            <person name="Brenner S.E."/>
            <person name="Batalov S."/>
            <person name="Forrest A.R."/>
            <person name="Zavolan M."/>
            <person name="Davis M.J."/>
            <person name="Wilming L.G."/>
            <person name="Aidinis V."/>
            <person name="Allen J.E."/>
            <person name="Ambesi-Impiombato A."/>
            <person name="Apweiler R."/>
            <person name="Aturaliya R.N."/>
            <person name="Bailey T.L."/>
            <person name="Bansal M."/>
            <person name="Baxter L."/>
            <person name="Beisel K.W."/>
            <person name="Bersano T."/>
            <person name="Bono H."/>
            <person name="Chalk A.M."/>
            <person name="Chiu K.P."/>
            <person name="Choudhary V."/>
            <person name="Christoffels A."/>
            <person name="Clutterbuck D.R."/>
            <person name="Crowe M.L."/>
            <person name="Dalla E."/>
            <person name="Dalrymple B.P."/>
            <person name="de Bono B."/>
            <person name="Della Gatta G."/>
            <person name="di Bernardo D."/>
            <person name="Down T."/>
            <person name="Engstrom P."/>
            <person name="Fagiolini M."/>
            <person name="Faulkner G."/>
            <person name="Fletcher C.F."/>
            <person name="Fukushima T."/>
            <person name="Furuno M."/>
            <person name="Futaki S."/>
            <person name="Gariboldi M."/>
            <person name="Georgii-Hemming P."/>
            <person name="Gingeras T.R."/>
            <person name="Gojobori T."/>
            <person name="Green R.E."/>
            <person name="Gustincich S."/>
            <person name="Harbers M."/>
            <person name="Hayashi Y."/>
            <person name="Hensch T.K."/>
            <person name="Hirokawa N."/>
            <person name="Hill D."/>
            <person name="Huminiecki L."/>
            <person name="Iacono M."/>
            <person name="Ikeo K."/>
            <person name="Iwama A."/>
            <person name="Ishikawa T."/>
            <person name="Jakt M."/>
            <person name="Kanapin A."/>
            <person name="Katoh M."/>
            <person name="Kawasawa Y."/>
            <person name="Kelso J."/>
            <person name="Kitamura H."/>
            <person name="Kitano H."/>
            <person name="Kollias G."/>
            <person name="Krishnan S.P."/>
            <person name="Kruger A."/>
            <person name="Kummerfeld S.K."/>
            <person name="Kurochkin I.V."/>
            <person name="Lareau L.F."/>
            <person name="Lazarevic D."/>
            <person name="Lipovich L."/>
            <person name="Liu J."/>
            <person name="Liuni S."/>
            <person name="McWilliam S."/>
            <person name="Madan Babu M."/>
            <person name="Madera M."/>
            <person name="Marchionni L."/>
            <person name="Matsuda H."/>
            <person name="Matsuzawa S."/>
            <person name="Miki H."/>
            <person name="Mignone F."/>
            <person name="Miyake S."/>
            <person name="Morris K."/>
            <person name="Mottagui-Tabar S."/>
            <person name="Mulder N."/>
            <person name="Nakano N."/>
            <person name="Nakauchi H."/>
            <person name="Ng P."/>
            <person name="Nilsson R."/>
            <person name="Nishiguchi S."/>
            <person name="Nishikawa S."/>
            <person name="Nori F."/>
            <person name="Ohara O."/>
            <person name="Okazaki Y."/>
            <person name="Orlando V."/>
            <person name="Pang K.C."/>
            <person name="Pavan W.J."/>
            <person name="Pavesi G."/>
            <person name="Pesole G."/>
            <person name="Petrovsky N."/>
            <person name="Piazza S."/>
            <person name="Reed J."/>
            <person name="Reid J.F."/>
            <person name="Ring B.Z."/>
            <person name="Ringwald M."/>
            <person name="Rost B."/>
            <person name="Ruan Y."/>
            <person name="Salzberg S.L."/>
            <person name="Sandelin A."/>
            <person name="Schneider C."/>
            <person name="Schoenbach C."/>
            <person name="Sekiguchi K."/>
            <person name="Semple C.A."/>
            <person name="Seno S."/>
            <person name="Sessa L."/>
            <person name="Sheng Y."/>
            <person name="Shibata Y."/>
            <person name="Shimada H."/>
            <person name="Shimada K."/>
            <person name="Silva D."/>
            <person name="Sinclair B."/>
            <person name="Sperling S."/>
            <person name="Stupka E."/>
            <person name="Sugiura K."/>
            <person name="Sultana R."/>
            <person name="Takenaka Y."/>
            <person name="Taki K."/>
            <person name="Tammoja K."/>
            <person name="Tan S.L."/>
            <person name="Tang S."/>
            <person name="Taylor M.S."/>
            <person name="Tegner J."/>
            <person name="Teichmann S.A."/>
            <person name="Ueda H.R."/>
            <person name="van Nimwegen E."/>
            <person name="Verardo R."/>
            <person name="Wei C.L."/>
            <person name="Yagi K."/>
            <person name="Yamanishi H."/>
            <person name="Zabarovsky E."/>
            <person name="Zhu S."/>
            <person name="Zimmer A."/>
            <person name="Hide W."/>
            <person name="Bult C."/>
            <person name="Grimmond S.M."/>
            <person name="Teasdale R.D."/>
            <person name="Liu E.T."/>
            <person name="Brusic V."/>
            <person name="Quackenbush J."/>
            <person name="Wahlestedt C."/>
            <person name="Mattick J.S."/>
            <person name="Hume D.A."/>
            <person name="Kai C."/>
            <person name="Sasaki D."/>
            <person name="Tomaru Y."/>
            <person name="Fukuda S."/>
            <person name="Kanamori-Katayama M."/>
            <person name="Suzuki M."/>
            <person name="Aoki J."/>
            <person name="Arakawa T."/>
            <person name="Iida J."/>
            <person name="Imamura K."/>
            <person name="Itoh M."/>
            <person name="Kato T."/>
            <person name="Kawaji H."/>
            <person name="Kawagashira N."/>
            <person name="Kawashima T."/>
            <person name="Kojima M."/>
            <person name="Kondo S."/>
            <person name="Konno H."/>
            <person name="Nakano K."/>
            <person name="Ninomiya N."/>
            <person name="Nishio T."/>
            <person name="Okada M."/>
            <person name="Plessy C."/>
            <person name="Shibata K."/>
            <person name="Shiraki T."/>
            <person name="Suzuki S."/>
            <person name="Tagami M."/>
            <person name="Waki K."/>
            <person name="Watahiki A."/>
            <person name="Okamura-Oho Y."/>
            <person name="Suzuki H."/>
            <person name="Kawai J."/>
            <person name="Hayashizaki Y."/>
        </authorList>
    </citation>
    <scope>NUCLEOTIDE SEQUENCE [LARGE SCALE MRNA]</scope>
    <source>
        <strain>C57BL/6J</strain>
        <tissue>Heart</tissue>
        <tissue>Tongue</tissue>
    </source>
</reference>
<reference key="2">
    <citation type="journal article" date="2004" name="Genome Res.">
        <title>The status, quality, and expansion of the NIH full-length cDNA project: the Mammalian Gene Collection (MGC).</title>
        <authorList>
            <consortium name="The MGC Project Team"/>
        </authorList>
    </citation>
    <scope>NUCLEOTIDE SEQUENCE [LARGE SCALE MRNA]</scope>
    <source>
        <tissue>Brain</tissue>
    </source>
</reference>
<reference key="3">
    <citation type="submission" date="2007-04" db="UniProtKB">
        <authorList>
            <person name="Lubec G."/>
            <person name="Kang S.U."/>
        </authorList>
    </citation>
    <scope>PROTEIN SEQUENCE OF 48-58 AND 59-82</scope>
    <scope>IDENTIFICATION BY MASS SPECTROMETRY</scope>
    <source>
        <strain>C57BL/6J</strain>
        <tissue>Brain</tissue>
    </source>
</reference>
<reference key="4">
    <citation type="journal article" date="2010" name="Cell">
        <title>A tissue-specific atlas of mouse protein phosphorylation and expression.</title>
        <authorList>
            <person name="Huttlin E.L."/>
            <person name="Jedrychowski M.P."/>
            <person name="Elias J.E."/>
            <person name="Goswami T."/>
            <person name="Rad R."/>
            <person name="Beausoleil S.A."/>
            <person name="Villen J."/>
            <person name="Haas W."/>
            <person name="Sowa M.E."/>
            <person name="Gygi S.P."/>
        </authorList>
    </citation>
    <scope>IDENTIFICATION BY MASS SPECTROMETRY [LARGE SCALE ANALYSIS]</scope>
    <source>
        <tissue>Brain</tissue>
        <tissue>Brown adipose tissue</tissue>
        <tissue>Heart</tissue>
        <tissue>Kidney</tissue>
        <tissue>Liver</tissue>
        <tissue>Testis</tissue>
    </source>
</reference>
<reference evidence="6" key="5">
    <citation type="journal article" date="2024" name="Nat. Struct. Mol. Biol.">
        <title>SCAF1 drives the compositional diversity of mammalian respirasomes.</title>
        <authorList>
            <person name="Vercellino I."/>
            <person name="Sazanov L.A."/>
        </authorList>
    </citation>
    <scope>STRUCTURE BY ELECTRON MICROSCOPY (3.60 ANGSTROMS) IN COMPLEX WITH MITOCHONDRIAL RESPIRATORY SUPERCOMPLEX</scope>
    <scope>FUNCTION</scope>
    <scope>SUBCELLULAR LOCATION</scope>
    <scope>SUBUNIT</scope>
</reference>
<sequence>MAGRISAFLKNAWAKEPVLVVSFSVWGLAIIMPMISPYTKYASMINKATPYNYPVPVRDDGNMPDVPSHPQDPLGPSLDWLKNL</sequence>
<dbReference type="EMBL" id="AK019099">
    <property type="protein sequence ID" value="BAB31545.1"/>
    <property type="molecule type" value="mRNA"/>
</dbReference>
<dbReference type="EMBL" id="AK003133">
    <property type="protein sequence ID" value="BAB22593.1"/>
    <property type="molecule type" value="mRNA"/>
</dbReference>
<dbReference type="EMBL" id="BC120712">
    <property type="protein sequence ID" value="AAI20713.1"/>
    <property type="molecule type" value="mRNA"/>
</dbReference>
<dbReference type="EMBL" id="BC120714">
    <property type="protein sequence ID" value="AAI20715.1"/>
    <property type="molecule type" value="mRNA"/>
</dbReference>
<dbReference type="CCDS" id="CCDS39728.1"/>
<dbReference type="RefSeq" id="NP_079624.1">
    <property type="nucleotide sequence ID" value="NM_025348.3"/>
</dbReference>
<dbReference type="PDB" id="6G2J">
    <property type="method" value="EM"/>
    <property type="resolution" value="3.30 A"/>
    <property type="chains" value="b=1-84"/>
</dbReference>
<dbReference type="PDB" id="6G72">
    <property type="method" value="EM"/>
    <property type="resolution" value="3.90 A"/>
    <property type="chains" value="b=1-84"/>
</dbReference>
<dbReference type="PDB" id="6ZR2">
    <property type="method" value="EM"/>
    <property type="resolution" value="3.10 A"/>
    <property type="chains" value="b=1-84"/>
</dbReference>
<dbReference type="PDB" id="6ZTQ">
    <property type="method" value="EM"/>
    <property type="resolution" value="3.00 A"/>
    <property type="chains" value="b=1-84"/>
</dbReference>
<dbReference type="PDB" id="7AK5">
    <property type="method" value="EM"/>
    <property type="resolution" value="3.17 A"/>
    <property type="chains" value="b=2-84"/>
</dbReference>
<dbReference type="PDB" id="7AK6">
    <property type="method" value="EM"/>
    <property type="resolution" value="3.82 A"/>
    <property type="chains" value="b=1-84"/>
</dbReference>
<dbReference type="PDB" id="7B93">
    <property type="method" value="EM"/>
    <property type="resolution" value="3.04 A"/>
    <property type="chains" value="b=1-84"/>
</dbReference>
<dbReference type="PDB" id="7PSA">
    <property type="method" value="EM"/>
    <property type="resolution" value="3.40 A"/>
    <property type="chains" value="b=1-84"/>
</dbReference>
<dbReference type="PDB" id="8C2S">
    <property type="method" value="EM"/>
    <property type="resolution" value="3.90 A"/>
    <property type="chains" value="b=1-84"/>
</dbReference>
<dbReference type="PDB" id="8CA3">
    <property type="method" value="EM"/>
    <property type="resolution" value="3.20 A"/>
    <property type="chains" value="b=1-84"/>
</dbReference>
<dbReference type="PDB" id="8CA5">
    <property type="method" value="EM"/>
    <property type="resolution" value="3.90 A"/>
    <property type="chains" value="b=1-84"/>
</dbReference>
<dbReference type="PDB" id="8IAO">
    <property type="method" value="EM"/>
    <property type="resolution" value="4.20 A"/>
    <property type="chains" value="b=1-84"/>
</dbReference>
<dbReference type="PDB" id="8IAP">
    <property type="method" value="EM"/>
    <property type="resolution" value="3.20 A"/>
    <property type="chains" value="b=1-84"/>
</dbReference>
<dbReference type="PDB" id="8IB4">
    <property type="method" value="EM"/>
    <property type="resolution" value="4.30 A"/>
    <property type="chains" value="b=1-84"/>
</dbReference>
<dbReference type="PDB" id="8IB5">
    <property type="method" value="EM"/>
    <property type="resolution" value="3.30 A"/>
    <property type="chains" value="b=1-84"/>
</dbReference>
<dbReference type="PDB" id="8IB9">
    <property type="method" value="EM"/>
    <property type="resolution" value="4.30 A"/>
    <property type="chains" value="b=1-84"/>
</dbReference>
<dbReference type="PDB" id="8IBA">
    <property type="method" value="EM"/>
    <property type="resolution" value="3.20 A"/>
    <property type="chains" value="b=1-84"/>
</dbReference>
<dbReference type="PDB" id="8IBD">
    <property type="method" value="EM"/>
    <property type="resolution" value="4.20 A"/>
    <property type="chains" value="b=1-84"/>
</dbReference>
<dbReference type="PDB" id="8IBE">
    <property type="method" value="EM"/>
    <property type="resolution" value="3.30 A"/>
    <property type="chains" value="b=1-84"/>
</dbReference>
<dbReference type="PDB" id="8IC2">
    <property type="method" value="EM"/>
    <property type="resolution" value="6.30 A"/>
    <property type="chains" value="b=1-84"/>
</dbReference>
<dbReference type="PDB" id="8IC3">
    <property type="method" value="EM"/>
    <property type="resolution" value="3.20 A"/>
    <property type="chains" value="b=1-84"/>
</dbReference>
<dbReference type="PDB" id="8OLT">
    <property type="method" value="EM"/>
    <property type="resolution" value="2.84 A"/>
    <property type="chains" value="b=1-84"/>
</dbReference>
<dbReference type="PDB" id="8OM1">
    <property type="method" value="EM"/>
    <property type="resolution" value="2.39 A"/>
    <property type="chains" value="b=1-84"/>
</dbReference>
<dbReference type="PDB" id="8PW5">
    <property type="method" value="EM"/>
    <property type="resolution" value="3.60 A"/>
    <property type="chains" value="b1=1-84"/>
</dbReference>
<dbReference type="PDB" id="8PW6">
    <property type="method" value="EM"/>
    <property type="resolution" value="3.30 A"/>
    <property type="chains" value="b1=1-84"/>
</dbReference>
<dbReference type="PDB" id="8PW7">
    <property type="method" value="EM"/>
    <property type="resolution" value="3.50 A"/>
    <property type="chains" value="b1=1-84"/>
</dbReference>
<dbReference type="PDB" id="8RGP">
    <property type="method" value="EM"/>
    <property type="resolution" value="3.00 A"/>
    <property type="chains" value="b=1-84"/>
</dbReference>
<dbReference type="PDB" id="8RGQ">
    <property type="method" value="EM"/>
    <property type="resolution" value="3.00 A"/>
    <property type="chains" value="b=1-84"/>
</dbReference>
<dbReference type="PDB" id="8RGR">
    <property type="method" value="EM"/>
    <property type="resolution" value="2.90 A"/>
    <property type="chains" value="b=1-84"/>
</dbReference>
<dbReference type="PDB" id="8RGT">
    <property type="method" value="EM"/>
    <property type="resolution" value="3.10 A"/>
    <property type="chains" value="b=1-84"/>
</dbReference>
<dbReference type="PDB" id="8UCA">
    <property type="method" value="EM"/>
    <property type="resolution" value="3.70 A"/>
    <property type="chains" value="A3/a3=1-84"/>
</dbReference>
<dbReference type="PDB" id="8XNL">
    <property type="method" value="EM"/>
    <property type="resolution" value="3.10 A"/>
    <property type="chains" value="b=1-84"/>
</dbReference>
<dbReference type="PDB" id="8XNM">
    <property type="method" value="EM"/>
    <property type="resolution" value="3.50 A"/>
    <property type="chains" value="b=1-84"/>
</dbReference>
<dbReference type="PDB" id="8XNN">
    <property type="method" value="EM"/>
    <property type="resolution" value="3.60 A"/>
    <property type="chains" value="b=1-84"/>
</dbReference>
<dbReference type="PDB" id="8XNO">
    <property type="method" value="EM"/>
    <property type="resolution" value="3.40 A"/>
    <property type="chains" value="b=1-84"/>
</dbReference>
<dbReference type="PDB" id="8XNP">
    <property type="method" value="EM"/>
    <property type="resolution" value="3.50 A"/>
    <property type="chains" value="b=1-84"/>
</dbReference>
<dbReference type="PDB" id="8XNQ">
    <property type="method" value="EM"/>
    <property type="resolution" value="3.70 A"/>
    <property type="chains" value="b=1-84"/>
</dbReference>
<dbReference type="PDB" id="8XNR">
    <property type="method" value="EM"/>
    <property type="resolution" value="3.30 A"/>
    <property type="chains" value="b=1-84"/>
</dbReference>
<dbReference type="PDB" id="8XNS">
    <property type="method" value="EM"/>
    <property type="resolution" value="3.50 A"/>
    <property type="chains" value="b=1-84"/>
</dbReference>
<dbReference type="PDB" id="8XNT">
    <property type="method" value="EM"/>
    <property type="resolution" value="4.10 A"/>
    <property type="chains" value="b=1-84"/>
</dbReference>
<dbReference type="PDB" id="8XNU">
    <property type="method" value="EM"/>
    <property type="resolution" value="3.60 A"/>
    <property type="chains" value="b=1-84"/>
</dbReference>
<dbReference type="PDB" id="8XNV">
    <property type="method" value="EM"/>
    <property type="resolution" value="3.30 A"/>
    <property type="chains" value="b=1-84"/>
</dbReference>
<dbReference type="PDB" id="8XNW">
    <property type="method" value="EM"/>
    <property type="resolution" value="3.60 A"/>
    <property type="chains" value="b=1-84"/>
</dbReference>
<dbReference type="PDB" id="8XNX">
    <property type="method" value="EM"/>
    <property type="resolution" value="3.50 A"/>
    <property type="chains" value="b=1-84"/>
</dbReference>
<dbReference type="PDB" id="8XNY">
    <property type="method" value="EM"/>
    <property type="resolution" value="4.10 A"/>
    <property type="chains" value="b=1-84"/>
</dbReference>
<dbReference type="PDB" id="8XNZ">
    <property type="method" value="EM"/>
    <property type="resolution" value="3.30 A"/>
    <property type="chains" value="b=1-84"/>
</dbReference>
<dbReference type="PDB" id="8XO0">
    <property type="method" value="EM"/>
    <property type="resolution" value="4.20 A"/>
    <property type="chains" value="b=1-84"/>
</dbReference>
<dbReference type="PDBsum" id="6G2J"/>
<dbReference type="PDBsum" id="6G72"/>
<dbReference type="PDBsum" id="6ZR2"/>
<dbReference type="PDBsum" id="6ZTQ"/>
<dbReference type="PDBsum" id="7AK5"/>
<dbReference type="PDBsum" id="7AK6"/>
<dbReference type="PDBsum" id="7B93"/>
<dbReference type="PDBsum" id="7PSA"/>
<dbReference type="PDBsum" id="8C2S"/>
<dbReference type="PDBsum" id="8CA3"/>
<dbReference type="PDBsum" id="8CA5"/>
<dbReference type="PDBsum" id="8IAO"/>
<dbReference type="PDBsum" id="8IAP"/>
<dbReference type="PDBsum" id="8IB4"/>
<dbReference type="PDBsum" id="8IB5"/>
<dbReference type="PDBsum" id="8IB9"/>
<dbReference type="PDBsum" id="8IBA"/>
<dbReference type="PDBsum" id="8IBD"/>
<dbReference type="PDBsum" id="8IBE"/>
<dbReference type="PDBsum" id="8IC2"/>
<dbReference type="PDBsum" id="8IC3"/>
<dbReference type="PDBsum" id="8OLT"/>
<dbReference type="PDBsum" id="8OM1"/>
<dbReference type="PDBsum" id="8PW5"/>
<dbReference type="PDBsum" id="8PW6"/>
<dbReference type="PDBsum" id="8PW7"/>
<dbReference type="PDBsum" id="8RGP"/>
<dbReference type="PDBsum" id="8RGQ"/>
<dbReference type="PDBsum" id="8RGR"/>
<dbReference type="PDBsum" id="8RGT"/>
<dbReference type="PDBsum" id="8UCA"/>
<dbReference type="PDBsum" id="8XNL"/>
<dbReference type="PDBsum" id="8XNM"/>
<dbReference type="PDBsum" id="8XNN"/>
<dbReference type="PDBsum" id="8XNO"/>
<dbReference type="PDBsum" id="8XNP"/>
<dbReference type="PDBsum" id="8XNQ"/>
<dbReference type="PDBsum" id="8XNR"/>
<dbReference type="PDBsum" id="8XNS"/>
<dbReference type="PDBsum" id="8XNT"/>
<dbReference type="PDBsum" id="8XNU"/>
<dbReference type="PDBsum" id="8XNV"/>
<dbReference type="PDBsum" id="8XNW"/>
<dbReference type="PDBsum" id="8XNX"/>
<dbReference type="PDBsum" id="8XNY"/>
<dbReference type="PDBsum" id="8XNZ"/>
<dbReference type="PDBsum" id="8XO0"/>
<dbReference type="EMDB" id="EMD-11377"/>
<dbReference type="EMDB" id="EMD-11424"/>
<dbReference type="EMDB" id="EMD-11810"/>
<dbReference type="EMDB" id="EMD-11811"/>
<dbReference type="EMDB" id="EMD-12095"/>
<dbReference type="EMDB" id="EMD-13611"/>
<dbReference type="EMDB" id="EMD-16398"/>
<dbReference type="EMDB" id="EMD-16516"/>
<dbReference type="EMDB" id="EMD-16518"/>
<dbReference type="EMDB" id="EMD-16962"/>
<dbReference type="EMDB" id="EMD-16965"/>
<dbReference type="EMDB" id="EMD-17989"/>
<dbReference type="EMDB" id="EMD-17990"/>
<dbReference type="EMDB" id="EMD-17991"/>
<dbReference type="EMDB" id="EMD-19145"/>
<dbReference type="EMDB" id="EMD-19146"/>
<dbReference type="EMDB" id="EMD-19147"/>
<dbReference type="EMDB" id="EMD-19148"/>
<dbReference type="EMDB" id="EMD-35313"/>
<dbReference type="EMDB" id="EMD-35314"/>
<dbReference type="EMDB" id="EMD-35331"/>
<dbReference type="EMDB" id="EMD-35332"/>
<dbReference type="EMDB" id="EMD-35336"/>
<dbReference type="EMDB" id="EMD-35337"/>
<dbReference type="EMDB" id="EMD-35340"/>
<dbReference type="EMDB" id="EMD-35341"/>
<dbReference type="EMDB" id="EMD-35352"/>
<dbReference type="EMDB" id="EMD-35353"/>
<dbReference type="EMDB" id="EMD-38506"/>
<dbReference type="EMDB" id="EMD-38507"/>
<dbReference type="EMDB" id="EMD-38508"/>
<dbReference type="EMDB" id="EMD-38509"/>
<dbReference type="EMDB" id="EMD-38510"/>
<dbReference type="EMDB" id="EMD-38511"/>
<dbReference type="EMDB" id="EMD-38512"/>
<dbReference type="EMDB" id="EMD-38513"/>
<dbReference type="EMDB" id="EMD-38514"/>
<dbReference type="EMDB" id="EMD-38515"/>
<dbReference type="EMDB" id="EMD-38516"/>
<dbReference type="EMDB" id="EMD-38517"/>
<dbReference type="EMDB" id="EMD-38518"/>
<dbReference type="EMDB" id="EMD-38519"/>
<dbReference type="EMDB" id="EMD-38520"/>
<dbReference type="EMDB" id="EMD-38521"/>
<dbReference type="EMDB" id="EMD-42122"/>
<dbReference type="EMDB" id="EMD-4345"/>
<dbReference type="EMDB" id="EMD-4356"/>
<dbReference type="SMR" id="Q9CQ91"/>
<dbReference type="BioGRID" id="211208">
    <property type="interactions" value="53"/>
</dbReference>
<dbReference type="ComplexPortal" id="CPX-266">
    <property type="entry name" value="Mitochondrial respiratory chain complex I"/>
</dbReference>
<dbReference type="CORUM" id="Q9CQ91"/>
<dbReference type="FunCoup" id="Q9CQ91">
    <property type="interactions" value="641"/>
</dbReference>
<dbReference type="IntAct" id="Q9CQ91">
    <property type="interactions" value="1"/>
</dbReference>
<dbReference type="STRING" id="10090.ENSMUSP00000075953"/>
<dbReference type="PhosphoSitePlus" id="Q9CQ91"/>
<dbReference type="jPOST" id="Q9CQ91"/>
<dbReference type="PaxDb" id="10090-ENSMUSP00000075953"/>
<dbReference type="PeptideAtlas" id="Q9CQ91"/>
<dbReference type="ProteomicsDB" id="252939"/>
<dbReference type="Pumba" id="Q9CQ91"/>
<dbReference type="Antibodypedia" id="32779">
    <property type="antibodies" value="130 antibodies from 22 providers"/>
</dbReference>
<dbReference type="DNASU" id="66091"/>
<dbReference type="Ensembl" id="ENSMUST00000076657.11">
    <property type="protein sequence ID" value="ENSMUSP00000075953.5"/>
    <property type="gene ID" value="ENSMUSG00000035674.14"/>
</dbReference>
<dbReference type="GeneID" id="66091"/>
<dbReference type="KEGG" id="mmu:66091"/>
<dbReference type="UCSC" id="uc009eve.1">
    <property type="organism name" value="mouse"/>
</dbReference>
<dbReference type="AGR" id="MGI:1913341"/>
<dbReference type="CTD" id="4696"/>
<dbReference type="MGI" id="MGI:1913341">
    <property type="gene designation" value="Ndufa3"/>
</dbReference>
<dbReference type="VEuPathDB" id="HostDB:ENSMUSG00000035674"/>
<dbReference type="eggNOG" id="ENOG502S4RS">
    <property type="taxonomic scope" value="Eukaryota"/>
</dbReference>
<dbReference type="GeneTree" id="ENSGT00390000004322"/>
<dbReference type="HOGENOM" id="CLU_171491_0_0_1"/>
<dbReference type="InParanoid" id="Q9CQ91"/>
<dbReference type="OMA" id="MINQAVP"/>
<dbReference type="OrthoDB" id="10030at9989"/>
<dbReference type="PhylomeDB" id="Q9CQ91"/>
<dbReference type="TreeFam" id="TF333021"/>
<dbReference type="Reactome" id="R-MMU-611105">
    <property type="pathway name" value="Respiratory electron transport"/>
</dbReference>
<dbReference type="Reactome" id="R-MMU-6799198">
    <property type="pathway name" value="Complex I biogenesis"/>
</dbReference>
<dbReference type="BioGRID-ORCS" id="66091">
    <property type="hits" value="21 hits in 77 CRISPR screens"/>
</dbReference>
<dbReference type="ChiTaRS" id="Ndufa3">
    <property type="organism name" value="mouse"/>
</dbReference>
<dbReference type="PRO" id="PR:Q9CQ91"/>
<dbReference type="Proteomes" id="UP000000589">
    <property type="component" value="Chromosome 7"/>
</dbReference>
<dbReference type="RNAct" id="Q9CQ91">
    <property type="molecule type" value="protein"/>
</dbReference>
<dbReference type="Bgee" id="ENSMUSG00000035674">
    <property type="expression patterns" value="Expressed in cardiac muscle of left ventricle and 255 other cell types or tissues"/>
</dbReference>
<dbReference type="ExpressionAtlas" id="Q9CQ91">
    <property type="expression patterns" value="baseline and differential"/>
</dbReference>
<dbReference type="GO" id="GO:0005743">
    <property type="term" value="C:mitochondrial inner membrane"/>
    <property type="evidence" value="ECO:0000314"/>
    <property type="project" value="UniProtKB"/>
</dbReference>
<dbReference type="GO" id="GO:0005739">
    <property type="term" value="C:mitochondrion"/>
    <property type="evidence" value="ECO:0007005"/>
    <property type="project" value="MGI"/>
</dbReference>
<dbReference type="GO" id="GO:0045271">
    <property type="term" value="C:respiratory chain complex I"/>
    <property type="evidence" value="ECO:0000314"/>
    <property type="project" value="UniProtKB"/>
</dbReference>
<dbReference type="GO" id="GO:0009060">
    <property type="term" value="P:aerobic respiration"/>
    <property type="evidence" value="ECO:0000303"/>
    <property type="project" value="ComplexPortal"/>
</dbReference>
<dbReference type="GO" id="GO:0042776">
    <property type="term" value="P:proton motive force-driven mitochondrial ATP synthesis"/>
    <property type="evidence" value="ECO:0000303"/>
    <property type="project" value="ComplexPortal"/>
</dbReference>
<dbReference type="CDD" id="cd22902">
    <property type="entry name" value="NDUFA3"/>
    <property type="match status" value="1"/>
</dbReference>
<dbReference type="InterPro" id="IPR026626">
    <property type="entry name" value="NDUFA3"/>
</dbReference>
<dbReference type="PANTHER" id="PTHR15221">
    <property type="entry name" value="NADH DEHYDROGENASE [UBIQUINONE] 1 ALPHA SUBCOMPLEX SUBUNIT 3"/>
    <property type="match status" value="1"/>
</dbReference>
<dbReference type="PANTHER" id="PTHR15221:SF0">
    <property type="entry name" value="NADH DEHYDROGENASE [UBIQUINONE] 1 ALPHA SUBCOMPLEX SUBUNIT 3"/>
    <property type="match status" value="1"/>
</dbReference>
<dbReference type="Pfam" id="PF14987">
    <property type="entry name" value="NADHdh_A3"/>
    <property type="match status" value="1"/>
</dbReference>
<name>NDUA3_MOUSE</name>
<comment type="function">
    <text evidence="4">Accessory subunit of the mitochondrial membrane respiratory chain NADH dehydrogenase (Complex I), that is believed not to be involved in catalysis. Complex I functions in the transfer of electrons from NADH to the respiratory chain. The immediate electron acceptor for the enzyme is believed to be ubiquinone.</text>
</comment>
<comment type="subunit">
    <text evidence="4">Complex I is composed of 45 different subunits.</text>
</comment>
<comment type="subcellular location">
    <subcellularLocation>
        <location evidence="4">Mitochondrion inner membrane</location>
        <topology evidence="2">Single-pass membrane protein</topology>
    </subcellularLocation>
</comment>
<comment type="similarity">
    <text evidence="5">Belongs to the complex I NDUFA3 subunit family.</text>
</comment>
<proteinExistence type="evidence at protein level"/>
<organism>
    <name type="scientific">Mus musculus</name>
    <name type="common">Mouse</name>
    <dbReference type="NCBI Taxonomy" id="10090"/>
    <lineage>
        <taxon>Eukaryota</taxon>
        <taxon>Metazoa</taxon>
        <taxon>Chordata</taxon>
        <taxon>Craniata</taxon>
        <taxon>Vertebrata</taxon>
        <taxon>Euteleostomi</taxon>
        <taxon>Mammalia</taxon>
        <taxon>Eutheria</taxon>
        <taxon>Euarchontoglires</taxon>
        <taxon>Glires</taxon>
        <taxon>Rodentia</taxon>
        <taxon>Myomorpha</taxon>
        <taxon>Muroidea</taxon>
        <taxon>Muridae</taxon>
        <taxon>Murinae</taxon>
        <taxon>Mus</taxon>
        <taxon>Mus</taxon>
    </lineage>
</organism>
<keyword id="KW-0002">3D-structure</keyword>
<keyword id="KW-0007">Acetylation</keyword>
<keyword id="KW-0903">Direct protein sequencing</keyword>
<keyword id="KW-0249">Electron transport</keyword>
<keyword id="KW-0472">Membrane</keyword>
<keyword id="KW-0496">Mitochondrion</keyword>
<keyword id="KW-0999">Mitochondrion inner membrane</keyword>
<keyword id="KW-1185">Reference proteome</keyword>
<keyword id="KW-0679">Respiratory chain</keyword>
<keyword id="KW-0812">Transmembrane</keyword>
<keyword id="KW-1133">Transmembrane helix</keyword>
<keyword id="KW-0813">Transport</keyword>